<protein>
    <recommendedName>
        <fullName>Hypoxanthine-guanine phosphoribosyltransferase</fullName>
        <shortName>HGPRT</shortName>
        <shortName>HGPRTase</shortName>
        <ecNumber evidence="3">2.4.2.8</ecNumber>
    </recommendedName>
</protein>
<name>HGPRT_STAAM</name>
<keyword id="KW-0963">Cytoplasm</keyword>
<keyword id="KW-0328">Glycosyltransferase</keyword>
<keyword id="KW-0460">Magnesium</keyword>
<keyword id="KW-0479">Metal-binding</keyword>
<keyword id="KW-0547">Nucleotide-binding</keyword>
<keyword id="KW-0660">Purine salvage</keyword>
<keyword id="KW-0808">Transferase</keyword>
<evidence type="ECO:0000250" key="1"/>
<evidence type="ECO:0000250" key="2">
    <source>
        <dbReference type="UniProtKB" id="P0A9M2"/>
    </source>
</evidence>
<evidence type="ECO:0000250" key="3">
    <source>
        <dbReference type="UniProtKB" id="P9WHQ9"/>
    </source>
</evidence>
<evidence type="ECO:0000305" key="4"/>
<proteinExistence type="inferred from homology"/>
<accession>P65827</accession>
<accession>Q99W93</accession>
<sequence length="179" mass="20154">MHNDLKEVLLTEEDIQNICKELGAQLTKDYQGKPLVCVGILKGSAMFMSDLIKRIDTHLSIDFMDVSSYHGGTESTGEVQIIKDLGSSIENKDVLIIEDILETGTTLKSITELLQSRKVNSLEIVTLLDKPNRRKADIEAKYVGKKIPDEFVVGYGLDYRELYRNLPYIGTLKPEVYSN</sequence>
<feature type="chain" id="PRO_0000139613" description="Hypoxanthine-guanine phosphoribosyltransferase">
    <location>
        <begin position="1"/>
        <end position="179"/>
    </location>
</feature>
<feature type="active site" description="Proton acceptor" evidence="2">
    <location>
        <position position="102"/>
    </location>
</feature>
<feature type="binding site" evidence="3">
    <location>
        <position position="42"/>
    </location>
    <ligand>
        <name>diphosphate</name>
        <dbReference type="ChEBI" id="CHEBI:33019"/>
    </ligand>
</feature>
<feature type="binding site" evidence="3">
    <location>
        <position position="43"/>
    </location>
    <ligand>
        <name>diphosphate</name>
        <dbReference type="ChEBI" id="CHEBI:33019"/>
    </ligand>
</feature>
<feature type="binding site" evidence="3">
    <location>
        <position position="98"/>
    </location>
    <ligand>
        <name>Mg(2+)</name>
        <dbReference type="ChEBI" id="CHEBI:18420"/>
    </ligand>
</feature>
<feature type="binding site" evidence="3">
    <location>
        <position position="99"/>
    </location>
    <ligand>
        <name>Mg(2+)</name>
        <dbReference type="ChEBI" id="CHEBI:18420"/>
    </ligand>
</feature>
<feature type="binding site" evidence="3">
    <location>
        <position position="130"/>
    </location>
    <ligand>
        <name>GMP</name>
        <dbReference type="ChEBI" id="CHEBI:58115"/>
    </ligand>
</feature>
<feature type="binding site" evidence="3">
    <location>
        <begin position="151"/>
        <end position="152"/>
    </location>
    <ligand>
        <name>GMP</name>
        <dbReference type="ChEBI" id="CHEBI:58115"/>
    </ligand>
</feature>
<feature type="binding site" evidence="3">
    <location>
        <position position="158"/>
    </location>
    <ligand>
        <name>GMP</name>
        <dbReference type="ChEBI" id="CHEBI:58115"/>
    </ligand>
</feature>
<feature type="binding site" evidence="3">
    <location>
        <position position="164"/>
    </location>
    <ligand>
        <name>diphosphate</name>
        <dbReference type="ChEBI" id="CHEBI:33019"/>
    </ligand>
</feature>
<comment type="function">
    <text evidence="3">Purine salvage pathway enzyme that catalyzes the transfer of the ribosyl-5-phosphate group from 5-phospho-alpha-D-ribose 1-diphosphate (PRPP) to the N9 position of the 6-oxopurines hypoxanthine and guanine to form the corresponding ribonucleotides IMP (inosine 5'-monophosphate) and GMP (guanosine 5'-monophosphate), with the release of PPi.</text>
</comment>
<comment type="catalytic activity">
    <reaction evidence="3">
        <text>IMP + diphosphate = hypoxanthine + 5-phospho-alpha-D-ribose 1-diphosphate</text>
        <dbReference type="Rhea" id="RHEA:17973"/>
        <dbReference type="ChEBI" id="CHEBI:17368"/>
        <dbReference type="ChEBI" id="CHEBI:33019"/>
        <dbReference type="ChEBI" id="CHEBI:58017"/>
        <dbReference type="ChEBI" id="CHEBI:58053"/>
        <dbReference type="EC" id="2.4.2.8"/>
    </reaction>
    <physiologicalReaction direction="right-to-left" evidence="3">
        <dbReference type="Rhea" id="RHEA:17975"/>
    </physiologicalReaction>
</comment>
<comment type="catalytic activity">
    <reaction evidence="3">
        <text>GMP + diphosphate = guanine + 5-phospho-alpha-D-ribose 1-diphosphate</text>
        <dbReference type="Rhea" id="RHEA:25424"/>
        <dbReference type="ChEBI" id="CHEBI:16235"/>
        <dbReference type="ChEBI" id="CHEBI:33019"/>
        <dbReference type="ChEBI" id="CHEBI:58017"/>
        <dbReference type="ChEBI" id="CHEBI:58115"/>
        <dbReference type="EC" id="2.4.2.8"/>
    </reaction>
    <physiologicalReaction direction="right-to-left" evidence="3">
        <dbReference type="Rhea" id="RHEA:25426"/>
    </physiologicalReaction>
</comment>
<comment type="cofactor">
    <cofactor evidence="3">
        <name>Mg(2+)</name>
        <dbReference type="ChEBI" id="CHEBI:18420"/>
    </cofactor>
</comment>
<comment type="pathway">
    <text evidence="3">Purine metabolism; IMP biosynthesis via salvage pathway; IMP from hypoxanthine: step 1/1.</text>
</comment>
<comment type="pathway">
    <text evidence="3">Purine metabolism; GMP biosynthesis via salvage pathway; GMP from guanine: step 1/1.</text>
</comment>
<comment type="subcellular location">
    <subcellularLocation>
        <location evidence="1">Cytoplasm</location>
    </subcellularLocation>
</comment>
<comment type="similarity">
    <text evidence="4">Belongs to the purine/pyrimidine phosphoribosyltransferase family.</text>
</comment>
<organism>
    <name type="scientific">Staphylococcus aureus (strain Mu50 / ATCC 700699)</name>
    <dbReference type="NCBI Taxonomy" id="158878"/>
    <lineage>
        <taxon>Bacteria</taxon>
        <taxon>Bacillati</taxon>
        <taxon>Bacillota</taxon>
        <taxon>Bacilli</taxon>
        <taxon>Bacillales</taxon>
        <taxon>Staphylococcaceae</taxon>
        <taxon>Staphylococcus</taxon>
    </lineage>
</organism>
<reference key="1">
    <citation type="journal article" date="2001" name="Lancet">
        <title>Whole genome sequencing of meticillin-resistant Staphylococcus aureus.</title>
        <authorList>
            <person name="Kuroda M."/>
            <person name="Ohta T."/>
            <person name="Uchiyama I."/>
            <person name="Baba T."/>
            <person name="Yuzawa H."/>
            <person name="Kobayashi I."/>
            <person name="Cui L."/>
            <person name="Oguchi A."/>
            <person name="Aoki K."/>
            <person name="Nagai Y."/>
            <person name="Lian J.-Q."/>
            <person name="Ito T."/>
            <person name="Kanamori M."/>
            <person name="Matsumaru H."/>
            <person name="Maruyama A."/>
            <person name="Murakami H."/>
            <person name="Hosoyama A."/>
            <person name="Mizutani-Ui Y."/>
            <person name="Takahashi N.K."/>
            <person name="Sawano T."/>
            <person name="Inoue R."/>
            <person name="Kaito C."/>
            <person name="Sekimizu K."/>
            <person name="Hirakawa H."/>
            <person name="Kuhara S."/>
            <person name="Goto S."/>
            <person name="Yabuzaki J."/>
            <person name="Kanehisa M."/>
            <person name="Yamashita A."/>
            <person name="Oshima K."/>
            <person name="Furuya K."/>
            <person name="Yoshino C."/>
            <person name="Shiba T."/>
            <person name="Hattori M."/>
            <person name="Ogasawara N."/>
            <person name="Hayashi H."/>
            <person name="Hiramatsu K."/>
        </authorList>
    </citation>
    <scope>NUCLEOTIDE SEQUENCE [LARGE SCALE GENOMIC DNA]</scope>
    <source>
        <strain>Mu50 / ATCC 700699</strain>
    </source>
</reference>
<gene>
    <name type="primary">hpt</name>
    <name type="ordered locus">SAV0510</name>
</gene>
<dbReference type="EC" id="2.4.2.8" evidence="3"/>
<dbReference type="EMBL" id="BA000017">
    <property type="protein sequence ID" value="BAB56672.1"/>
    <property type="molecule type" value="Genomic_DNA"/>
</dbReference>
<dbReference type="RefSeq" id="WP_000551283.1">
    <property type="nucleotide sequence ID" value="NC_002758.2"/>
</dbReference>
<dbReference type="SMR" id="P65827"/>
<dbReference type="KEGG" id="sav:SAV0510"/>
<dbReference type="HOGENOM" id="CLU_073615_0_0_9"/>
<dbReference type="PhylomeDB" id="P65827"/>
<dbReference type="UniPathway" id="UPA00591">
    <property type="reaction ID" value="UER00648"/>
</dbReference>
<dbReference type="UniPathway" id="UPA00909">
    <property type="reaction ID" value="UER00887"/>
</dbReference>
<dbReference type="Proteomes" id="UP000002481">
    <property type="component" value="Chromosome"/>
</dbReference>
<dbReference type="GO" id="GO:0005829">
    <property type="term" value="C:cytosol"/>
    <property type="evidence" value="ECO:0007669"/>
    <property type="project" value="TreeGrafter"/>
</dbReference>
<dbReference type="GO" id="GO:0052657">
    <property type="term" value="F:guanine phosphoribosyltransferase activity"/>
    <property type="evidence" value="ECO:0007669"/>
    <property type="project" value="RHEA"/>
</dbReference>
<dbReference type="GO" id="GO:0004422">
    <property type="term" value="F:hypoxanthine phosphoribosyltransferase activity"/>
    <property type="evidence" value="ECO:0007669"/>
    <property type="project" value="InterPro"/>
</dbReference>
<dbReference type="GO" id="GO:0000287">
    <property type="term" value="F:magnesium ion binding"/>
    <property type="evidence" value="ECO:0007669"/>
    <property type="project" value="TreeGrafter"/>
</dbReference>
<dbReference type="GO" id="GO:0000166">
    <property type="term" value="F:nucleotide binding"/>
    <property type="evidence" value="ECO:0007669"/>
    <property type="project" value="UniProtKB-KW"/>
</dbReference>
<dbReference type="GO" id="GO:0032263">
    <property type="term" value="P:GMP salvage"/>
    <property type="evidence" value="ECO:0007669"/>
    <property type="project" value="UniProtKB-UniPathway"/>
</dbReference>
<dbReference type="GO" id="GO:0006178">
    <property type="term" value="P:guanine salvage"/>
    <property type="evidence" value="ECO:0007669"/>
    <property type="project" value="TreeGrafter"/>
</dbReference>
<dbReference type="GO" id="GO:0046100">
    <property type="term" value="P:hypoxanthine metabolic process"/>
    <property type="evidence" value="ECO:0007669"/>
    <property type="project" value="TreeGrafter"/>
</dbReference>
<dbReference type="GO" id="GO:0032264">
    <property type="term" value="P:IMP salvage"/>
    <property type="evidence" value="ECO:0007669"/>
    <property type="project" value="UniProtKB-UniPathway"/>
</dbReference>
<dbReference type="GO" id="GO:0006166">
    <property type="term" value="P:purine ribonucleoside salvage"/>
    <property type="evidence" value="ECO:0007669"/>
    <property type="project" value="UniProtKB-KW"/>
</dbReference>
<dbReference type="CDD" id="cd06223">
    <property type="entry name" value="PRTases_typeI"/>
    <property type="match status" value="1"/>
</dbReference>
<dbReference type="FunFam" id="3.40.50.2020:FF:000006">
    <property type="entry name" value="Hypoxanthine phosphoribosyltransferase"/>
    <property type="match status" value="1"/>
</dbReference>
<dbReference type="Gene3D" id="3.40.50.2020">
    <property type="match status" value="1"/>
</dbReference>
<dbReference type="InterPro" id="IPR050408">
    <property type="entry name" value="HGPRT"/>
</dbReference>
<dbReference type="InterPro" id="IPR005904">
    <property type="entry name" value="Hxn_phspho_trans"/>
</dbReference>
<dbReference type="InterPro" id="IPR000836">
    <property type="entry name" value="PRibTrfase_dom"/>
</dbReference>
<dbReference type="InterPro" id="IPR029057">
    <property type="entry name" value="PRTase-like"/>
</dbReference>
<dbReference type="NCBIfam" id="TIGR01203">
    <property type="entry name" value="HGPRTase"/>
    <property type="match status" value="1"/>
</dbReference>
<dbReference type="PANTHER" id="PTHR43340:SF1">
    <property type="entry name" value="HYPOXANTHINE PHOSPHORIBOSYLTRANSFERASE"/>
    <property type="match status" value="1"/>
</dbReference>
<dbReference type="PANTHER" id="PTHR43340">
    <property type="entry name" value="HYPOXANTHINE-GUANINE PHOSPHORIBOSYLTRANSFERASE"/>
    <property type="match status" value="1"/>
</dbReference>
<dbReference type="Pfam" id="PF00156">
    <property type="entry name" value="Pribosyltran"/>
    <property type="match status" value="1"/>
</dbReference>
<dbReference type="SUPFAM" id="SSF53271">
    <property type="entry name" value="PRTase-like"/>
    <property type="match status" value="1"/>
</dbReference>